<keyword id="KW-1003">Cell membrane</keyword>
<keyword id="KW-0472">Membrane</keyword>
<keyword id="KW-0812">Transmembrane</keyword>
<keyword id="KW-1133">Transmembrane helix</keyword>
<evidence type="ECO:0000250" key="1"/>
<evidence type="ECO:0000255" key="2"/>
<evidence type="ECO:0000305" key="3"/>
<reference key="1">
    <citation type="journal article" date="2002" name="Lancet">
        <title>Genome and virulence determinants of high virulence community-acquired MRSA.</title>
        <authorList>
            <person name="Baba T."/>
            <person name="Takeuchi F."/>
            <person name="Kuroda M."/>
            <person name="Yuzawa H."/>
            <person name="Aoki K."/>
            <person name="Oguchi A."/>
            <person name="Nagai Y."/>
            <person name="Iwama N."/>
            <person name="Asano K."/>
            <person name="Naimi T."/>
            <person name="Kuroda H."/>
            <person name="Cui L."/>
            <person name="Yamamoto K."/>
            <person name="Hiramatsu K."/>
        </authorList>
    </citation>
    <scope>NUCLEOTIDE SEQUENCE [LARGE SCALE GENOMIC DNA]</scope>
    <source>
        <strain>MW2</strain>
    </source>
</reference>
<organism>
    <name type="scientific">Staphylococcus aureus (strain MW2)</name>
    <dbReference type="NCBI Taxonomy" id="196620"/>
    <lineage>
        <taxon>Bacteria</taxon>
        <taxon>Bacillati</taxon>
        <taxon>Bacillota</taxon>
        <taxon>Bacilli</taxon>
        <taxon>Bacillales</taxon>
        <taxon>Staphylococcaceae</taxon>
        <taxon>Staphylococcus</taxon>
    </lineage>
</organism>
<comment type="subcellular location">
    <subcellularLocation>
        <location evidence="1">Cell membrane</location>
        <topology evidence="1">Multi-pass membrane protein</topology>
    </subcellularLocation>
</comment>
<comment type="similarity">
    <text evidence="3">Belongs to the UPF0754 family.</text>
</comment>
<accession>Q8NVV4</accession>
<proteinExistence type="inferred from homology"/>
<protein>
    <recommendedName>
        <fullName>UPF0754 membrane protein MW1787</fullName>
    </recommendedName>
</protein>
<name>Y1787_STAAW</name>
<gene>
    <name type="ordered locus">MW1787</name>
</gene>
<sequence length="374" mass="42731">MNALFIIIFMIVVGAIIGGITNVIAIRMLFHPFKPYYIFKFRVPFTPGLIPKRREEIATKIGQVIEEHLLTETLINEKLKSEQSQQAIESMIQQQLQKLTKDQLSIKQITSQIDIDLEQVLQTNGNQYIESQLNNYYTKHQNQTIASLLPNQLVTFLDQHVDNATDLLCDRARNYLSSAKGTQDINDMLDTFFNEKGKLFGMLQMFMTKESIADRIQQELIRLTSHPKARTIVTSLITNEYQTFKDKPLNELLDASQFNEIAENLSVYVTTYASKQANKPVVTLMPQFVDYLEGQLSSKLANLIIEKLSIHLSTIMKKVDLRGLIEEQINTFDLDYIEKLIIEIANKELKLIMSLGFILGGIIGFFQGLVAIFV</sequence>
<feature type="chain" id="PRO_0000388312" description="UPF0754 membrane protein MW1787">
    <location>
        <begin position="1"/>
        <end position="374"/>
    </location>
</feature>
<feature type="transmembrane region" description="Helical" evidence="2">
    <location>
        <begin position="4"/>
        <end position="24"/>
    </location>
</feature>
<feature type="transmembrane region" description="Helical" evidence="2">
    <location>
        <begin position="354"/>
        <end position="374"/>
    </location>
</feature>
<dbReference type="EMBL" id="BA000033">
    <property type="protein sequence ID" value="BAB95652.1"/>
    <property type="molecule type" value="Genomic_DNA"/>
</dbReference>
<dbReference type="RefSeq" id="WP_000992521.1">
    <property type="nucleotide sequence ID" value="NC_003923.1"/>
</dbReference>
<dbReference type="SMR" id="Q8NVV4"/>
<dbReference type="DNASU" id="1003899"/>
<dbReference type="KEGG" id="sam:MW1787"/>
<dbReference type="HOGENOM" id="CLU_042384_0_0_9"/>
<dbReference type="GO" id="GO:0005886">
    <property type="term" value="C:plasma membrane"/>
    <property type="evidence" value="ECO:0007669"/>
    <property type="project" value="UniProtKB-SubCell"/>
</dbReference>
<dbReference type="InterPro" id="IPR007383">
    <property type="entry name" value="DUF445"/>
</dbReference>
<dbReference type="InterPro" id="IPR016991">
    <property type="entry name" value="UCP032178"/>
</dbReference>
<dbReference type="PANTHER" id="PTHR35791">
    <property type="entry name" value="UPF0754 MEMBRANE PROTEIN YHEB"/>
    <property type="match status" value="1"/>
</dbReference>
<dbReference type="PANTHER" id="PTHR35791:SF1">
    <property type="entry name" value="UPF0754 MEMBRANE PROTEIN YHEB"/>
    <property type="match status" value="1"/>
</dbReference>
<dbReference type="Pfam" id="PF04286">
    <property type="entry name" value="DUF445"/>
    <property type="match status" value="1"/>
</dbReference>
<dbReference type="PIRSF" id="PIRSF032178">
    <property type="entry name" value="UCP032178"/>
    <property type="match status" value="1"/>
</dbReference>